<feature type="chain" id="PRO_0000204551" description="Isoflavone reductase homolog A622">
    <location>
        <begin position="1"/>
        <end position="310"/>
    </location>
</feature>
<feature type="active site" description="Proton acceptor" evidence="2">
    <location>
        <position position="135"/>
    </location>
</feature>
<feature type="binding site" evidence="2">
    <location>
        <begin position="13"/>
        <end position="19"/>
    </location>
    <ligand>
        <name>NADP(+)</name>
        <dbReference type="ChEBI" id="CHEBI:58349"/>
    </ligand>
</feature>
<feature type="binding site" evidence="2">
    <location>
        <position position="38"/>
    </location>
    <ligand>
        <name>NADP(+)</name>
        <dbReference type="ChEBI" id="CHEBI:58349"/>
    </ligand>
</feature>
<feature type="binding site" evidence="2">
    <location>
        <position position="47"/>
    </location>
    <ligand>
        <name>NADP(+)</name>
        <dbReference type="ChEBI" id="CHEBI:58349"/>
    </ligand>
</feature>
<feature type="binding site" evidence="2">
    <location>
        <position position="139"/>
    </location>
    <ligand>
        <name>NADP(+)</name>
        <dbReference type="ChEBI" id="CHEBI:58349"/>
    </ligand>
</feature>
<protein>
    <recommendedName>
        <fullName evidence="9">Isoflavone reductase homolog A622</fullName>
        <shortName evidence="8">NtA622</shortName>
        <ecNumber evidence="9">1.3.1.-</ecNumber>
    </recommendedName>
</protein>
<evidence type="ECO:0000250" key="1">
    <source>
        <dbReference type="UniProtKB" id="P52580"/>
    </source>
</evidence>
<evidence type="ECO:0000250" key="2">
    <source>
        <dbReference type="UniProtKB" id="Q9LD14"/>
    </source>
</evidence>
<evidence type="ECO:0000269" key="3">
    <source>
    </source>
</evidence>
<evidence type="ECO:0000269" key="4">
    <source>
    </source>
</evidence>
<evidence type="ECO:0000269" key="5">
    <source>
    </source>
</evidence>
<evidence type="ECO:0000269" key="6">
    <source>
    </source>
</evidence>
<evidence type="ECO:0000303" key="7">
    <source>
    </source>
</evidence>
<evidence type="ECO:0000303" key="8">
    <source>
    </source>
</evidence>
<evidence type="ECO:0000305" key="9"/>
<evidence type="ECO:0000312" key="10">
    <source>
        <dbReference type="EMBL" id="AII71784.1"/>
    </source>
</evidence>
<name>IFRH_TOBAC</name>
<reference key="1">
    <citation type="journal article" date="1994" name="Plant Cell">
        <title>Gene expression in tobacco low-nicotine mutants.</title>
        <authorList>
            <person name="Hibi N."/>
            <person name="Higashiguchi S."/>
            <person name="Hashimoto T."/>
            <person name="Yamada Y."/>
        </authorList>
    </citation>
    <scope>NUCLEOTIDE SEQUENCE [MRNA]</scope>
    <scope>TISSUE SPECIFICITY</scope>
    <scope>REPRESSION BY AUXIN</scope>
    <scope>INDUCTION BY YOUNG AERIAL TISSUES REMOVAL</scope>
    <source>
        <strain>cv. Burley 21</strain>
        <tissue>Root</tissue>
    </source>
</reference>
<reference key="2">
    <citation type="submission" date="2014-04" db="EMBL/GenBank/DDBJ databases">
        <title>Molecular cloning of isoflavone reductase-like gene family from tobacco.</title>
        <authorList>
            <person name="Chen W."/>
            <person name="Lin Y.-C."/>
            <person name="Gao W.-C."/>
            <person name="Li C.-J."/>
            <person name="Wang S.-G."/>
            <person name="Lu J."/>
            <person name="Chai Y.-R."/>
        </authorList>
    </citation>
    <scope>NUCLEOTIDE SEQUENCE [GENOMIC DNA / MRNA]</scope>
</reference>
<reference key="3">
    <citation type="journal article" date="2014" name="Nat. Commun.">
        <title>The tobacco genome sequence and its comparison with those of tomato and potato.</title>
        <authorList>
            <person name="Sierro N."/>
            <person name="Battey J.N."/>
            <person name="Ouadi S."/>
            <person name="Bakaher N."/>
            <person name="Bovet L."/>
            <person name="Willig A."/>
            <person name="Goepfert S."/>
            <person name="Peitsch M.C."/>
            <person name="Ivanov N.V."/>
        </authorList>
    </citation>
    <scope>NUCLEOTIDE SEQUENCE [LARGE SCALE GENOMIC DNA]</scope>
    <source>
        <strain>cv. TN90</strain>
    </source>
</reference>
<reference key="4">
    <citation type="journal article" date="2002" name="Plant Mol. Biol.">
        <title>Expression patterns of two tobacco isoflavone reductase-like genes and their possible roles in secondary metabolism in tobacco.</title>
        <authorList>
            <person name="Shoji T."/>
            <person name="Winz R."/>
            <person name="Iwase T."/>
            <person name="Nakajima K."/>
            <person name="Yamada Y."/>
            <person name="Hashimoto T."/>
        </authorList>
    </citation>
    <scope>FUNCTION</scope>
    <scope>TISSUE SPECIFICITY</scope>
    <scope>INDUCTION BY METHYL JASMONATE</scope>
</reference>
<reference key="5">
    <citation type="journal article" date="2009" name="Plant Mol. Biol.">
        <title>A PIP-family protein is required for biosynthesis of tobacco alkaloids.</title>
        <authorList>
            <person name="Kajikawa M."/>
            <person name="Hirai N."/>
            <person name="Hashimoto T."/>
        </authorList>
    </citation>
    <scope>FUNCTION</scope>
    <scope>TISSUE SPECIFICITY</scope>
    <scope>INDUCTION BY METHYL JASMONATE</scope>
    <scope>PATHWAY</scope>
    <source>
        <strain>cv. Petit Havana SR1</strain>
    </source>
</reference>
<reference key="6">
    <citation type="journal article" date="2013" name="Phytochemistry">
        <title>Molecular genetics of alkaloid biosynthesis in Nicotiana tabacum.</title>
        <authorList>
            <person name="Dewey R.E."/>
            <person name="Xie J."/>
        </authorList>
    </citation>
    <scope>REVIEW ON ALKALOID BIOSYNTHESIS IN NICOTIANA TABACUM</scope>
</reference>
<reference key="7">
    <citation type="journal article" date="2015" name="Mol. Genet. Genomics">
        <title>Current status and prospects for the study of Nicotiana genomics, genetics, and nicotine biosynthesis genes.</title>
        <authorList>
            <person name="Wang X."/>
            <person name="Bennetzen J.L."/>
        </authorList>
    </citation>
    <scope>REVIEW ON NICOTINE BIOSYNTHESIS</scope>
</reference>
<reference key="8">
    <citation type="journal article" date="2019" name="Food Chem. Toxicol.">
        <title>Antiparasitic properties of leaf extracts derived from selected Nicotiana species and Nicotiana tabacum varieties.</title>
        <authorList>
            <person name="Schorderet Weber S."/>
            <person name="Kaminski K.P."/>
            <person name="Perret J.-L."/>
            <person name="Leroy P."/>
            <person name="Mazurov A."/>
            <person name="Peitsch M.C."/>
            <person name="Ivanov N.V."/>
            <person name="Hoeng J."/>
        </authorList>
    </citation>
    <scope>FUNCTION</scope>
    <source>
        <strain>cv. Burley Stella</strain>
        <strain>cv. Burley TN90</strain>
        <strain>cv. Virginia ITB 683</strain>
        <strain>cv. Virginia K326</strain>
    </source>
</reference>
<comment type="function">
    <text evidence="3 4 5">Involved in the biosynthesis of pyridine alkaloid natural products, leading mainly to the production of anabasine, anatabine, nicotine and nornicotine, effective deterrents against herbivores with antiparasitic and pesticide properties (neurotoxins); nornicotine serves as the precursor in the synthesis of the carcinogen compound N'-nitrosonornicotine (NNN) (PubMed:19002761, PubMed:31276744). Probable NADPH-dependent oxidoreductase that binds NADPH in vitro. Does not seem to be involved in the NADPH-dependent reduction of phenylcoumaran benzylic ethers (PubMed:12369619). Reductase that may be involved in a late step of tobacco alkaloid biosynthesis. Maybe involved in either the formation of a nicotinic acid-derived precursor or the final condensation reaction of tobacco alkaloids (PubMed:19002761).</text>
</comment>
<comment type="pathway">
    <text evidence="4">Alkaloid biosynthesis; nicotine biosynthesis.</text>
</comment>
<comment type="subunit">
    <text evidence="1">Monomer.</text>
</comment>
<comment type="subcellular location">
    <subcellularLocation>
        <location evidence="1">Cytoplasm</location>
    </subcellularLocation>
</comment>
<comment type="tissue specificity">
    <text evidence="3 4 6">Expressed in roots.</text>
</comment>
<comment type="induction">
    <text evidence="3 4 6">Induced by methyl jasmonate in roots (PubMed:12369619, PubMed:19002761). Down-regulated by auxin (PubMed:8038607). Accumulates upon the removal of flower heads and young leaves (PubMed:8038607).</text>
</comment>
<comment type="miscellaneous">
    <text evidence="4">Root cells silencing A622 exhibit inhibition of cell growth, severely decreased formation of several alkaloids, and accumulation of nicotinic acid beta-N-glucoside and N-methylpyrrolinium cation.</text>
</comment>
<comment type="similarity">
    <text evidence="9">Belongs to the NmrA-type oxidoreductase family. Isoflavone reductase subfamily.</text>
</comment>
<proteinExistence type="evidence at transcript level"/>
<organism>
    <name type="scientific">Nicotiana tabacum</name>
    <name type="common">Common tobacco</name>
    <dbReference type="NCBI Taxonomy" id="4097"/>
    <lineage>
        <taxon>Eukaryota</taxon>
        <taxon>Viridiplantae</taxon>
        <taxon>Streptophyta</taxon>
        <taxon>Embryophyta</taxon>
        <taxon>Tracheophyta</taxon>
        <taxon>Spermatophyta</taxon>
        <taxon>Magnoliopsida</taxon>
        <taxon>eudicotyledons</taxon>
        <taxon>Gunneridae</taxon>
        <taxon>Pentapetalae</taxon>
        <taxon>asterids</taxon>
        <taxon>lamiids</taxon>
        <taxon>Solanales</taxon>
        <taxon>Solanaceae</taxon>
        <taxon>Nicotianoideae</taxon>
        <taxon>Nicotianeae</taxon>
        <taxon>Nicotiana</taxon>
    </lineage>
</organism>
<sequence>MVVSEKSKILIIGGTGYIGKYLVETSAKSGHPTFALIRESTLKNPEKSKLIDTFKSYGVTLLFGDISNQESLLKAIKQVDVVISTVGGQQFTDQVNIIKAIKEAGNIKRFLPSEFGFDVDHARAIEPAASLFALKVRIRRMIEAEGIPYTYVICNWFADFFLPNLGQLEAKTPPRDKVVIFGDGNPKAIYVKEEDIATYTIEAVDDPRTLNKTLHMRPPANILSFNEIVSLWEDKIGKTLEKLYLSEEDILQIVQEGPLPLRTNLAICHSVFVNGDSANFEVQPPTGVEATELYPKVKYTTVDEFYNKFV</sequence>
<keyword id="KW-0017">Alkaloid metabolism</keyword>
<keyword id="KW-0963">Cytoplasm</keyword>
<keyword id="KW-0521">NADP</keyword>
<keyword id="KW-0560">Oxidoreductase</keyword>
<keyword id="KW-1185">Reference proteome</keyword>
<gene>
    <name evidence="7" type="primary">A622</name>
    <name evidence="10" type="synonym">IRL1</name>
    <name type="ORF">LOC107784748</name>
</gene>
<dbReference type="EC" id="1.3.1.-" evidence="9"/>
<dbReference type="EMBL" id="D28505">
    <property type="protein sequence ID" value="BAA05866.1"/>
    <property type="molecule type" value="mRNA"/>
</dbReference>
<dbReference type="EMBL" id="KJ776595">
    <property type="protein sequence ID" value="AII71783.1"/>
    <property type="molecule type" value="Genomic_DNA"/>
</dbReference>
<dbReference type="EMBL" id="KJ776596">
    <property type="protein sequence ID" value="AII71784.1"/>
    <property type="molecule type" value="mRNA"/>
</dbReference>
<dbReference type="PIR" id="T02202">
    <property type="entry name" value="T02202"/>
</dbReference>
<dbReference type="RefSeq" id="NP_001312315.1">
    <property type="nucleotide sequence ID" value="NM_001325386.1"/>
</dbReference>
<dbReference type="SMR" id="P52579"/>
<dbReference type="STRING" id="4097.P52579"/>
<dbReference type="PaxDb" id="4097-P52579"/>
<dbReference type="GeneID" id="107784748"/>
<dbReference type="KEGG" id="nta:107784748"/>
<dbReference type="OMA" id="QPELMKH"/>
<dbReference type="OrthoDB" id="419598at2759"/>
<dbReference type="PhylomeDB" id="P52579"/>
<dbReference type="UniPathway" id="UPA00107"/>
<dbReference type="Proteomes" id="UP000084051">
    <property type="component" value="Unplaced"/>
</dbReference>
<dbReference type="GO" id="GO:0005737">
    <property type="term" value="C:cytoplasm"/>
    <property type="evidence" value="ECO:0007669"/>
    <property type="project" value="UniProtKB-SubCell"/>
</dbReference>
<dbReference type="GO" id="GO:0050661">
    <property type="term" value="F:NADP binding"/>
    <property type="evidence" value="ECO:0000314"/>
    <property type="project" value="UniProtKB"/>
</dbReference>
<dbReference type="GO" id="GO:0016491">
    <property type="term" value="F:oxidoreductase activity"/>
    <property type="evidence" value="ECO:0007669"/>
    <property type="project" value="UniProtKB-KW"/>
</dbReference>
<dbReference type="GO" id="GO:0009820">
    <property type="term" value="P:alkaloid metabolic process"/>
    <property type="evidence" value="ECO:0007669"/>
    <property type="project" value="UniProtKB-KW"/>
</dbReference>
<dbReference type="GO" id="GO:0042179">
    <property type="term" value="P:nicotine biosynthetic process"/>
    <property type="evidence" value="ECO:0007669"/>
    <property type="project" value="UniProtKB-UniPathway"/>
</dbReference>
<dbReference type="GO" id="GO:0009733">
    <property type="term" value="P:response to auxin"/>
    <property type="evidence" value="ECO:0000314"/>
    <property type="project" value="UniProtKB"/>
</dbReference>
<dbReference type="GO" id="GO:0044550">
    <property type="term" value="P:secondary metabolite biosynthetic process"/>
    <property type="evidence" value="ECO:0000315"/>
    <property type="project" value="UniProtKB"/>
</dbReference>
<dbReference type="CDD" id="cd05259">
    <property type="entry name" value="PCBER_SDR_a"/>
    <property type="match status" value="1"/>
</dbReference>
<dbReference type="Gene3D" id="3.40.50.720">
    <property type="entry name" value="NAD(P)-binding Rossmann-like Domain"/>
    <property type="match status" value="1"/>
</dbReference>
<dbReference type="Gene3D" id="3.90.25.10">
    <property type="entry name" value="UDP-galactose 4-epimerase, domain 1"/>
    <property type="match status" value="1"/>
</dbReference>
<dbReference type="InterPro" id="IPR036291">
    <property type="entry name" value="NAD(P)-bd_dom_sf"/>
</dbReference>
<dbReference type="InterPro" id="IPR008030">
    <property type="entry name" value="NmrA-like"/>
</dbReference>
<dbReference type="InterPro" id="IPR050608">
    <property type="entry name" value="NmrA-type/Isoflavone_red_sf"/>
</dbReference>
<dbReference type="InterPro" id="IPR045312">
    <property type="entry name" value="PCBER-like"/>
</dbReference>
<dbReference type="PANTHER" id="PTHR43349:SF49">
    <property type="entry name" value="ISOFLAVONE REDUCTASE HOMOLOG A622"/>
    <property type="match status" value="1"/>
</dbReference>
<dbReference type="PANTHER" id="PTHR43349">
    <property type="entry name" value="PINORESINOL REDUCTASE-RELATED"/>
    <property type="match status" value="1"/>
</dbReference>
<dbReference type="Pfam" id="PF05368">
    <property type="entry name" value="NmrA"/>
    <property type="match status" value="1"/>
</dbReference>
<dbReference type="SUPFAM" id="SSF51735">
    <property type="entry name" value="NAD(P)-binding Rossmann-fold domains"/>
    <property type="match status" value="1"/>
</dbReference>
<accession>P52579</accession>
<accession>A0A076JBH7</accession>
<accession>A0A7F0KMK4</accession>